<protein>
    <recommendedName>
        <fullName>Putative amino-acid transporter YggA</fullName>
    </recommendedName>
</protein>
<comment type="subcellular location">
    <subcellularLocation>
        <location evidence="2">Cell membrane</location>
        <topology evidence="2">Multi-pass membrane protein</topology>
    </subcellularLocation>
</comment>
<comment type="similarity">
    <text evidence="2">Belongs to the LysE/ArgO transporter (TC 2.A.75) family.</text>
</comment>
<comment type="sequence caution" evidence="2">
    <conflict type="erroneous initiation">
        <sequence resource="EMBL-CDS" id="AAB70019"/>
    </conflict>
</comment>
<proteinExistence type="inferred from homology"/>
<sequence>MFATTLQGFTLGLAMIIPIGAQNAFVLSRGIHRNHHLLAATLCCLCDLILIGIGVFGGANLLAASPIGLALLTWGGVLFLCWFGIRSLRSAWQGQGAALADSPRLMGVKSVLAMTLGVTLLNPHVYLDTLMLLGSFGSQFAEPLRPAFAAGAMLASLVWFYSLAFGAAALSPWLARGRVQQAIDTIVGLIMLGLALQLASGALLAS</sequence>
<reference key="1">
    <citation type="journal article" date="1997" name="J. Bacteriol.">
        <title>Quorum sensing in Aeromonas hydrophila and Aeromonas salmonicida: identification of the LuxRI homologs AhyRI and AsaRI and their cognate N-acylhomoserine lactone signal molecules.</title>
        <authorList>
            <person name="Swift S."/>
            <person name="Karlyshev A.V."/>
            <person name="Fish L."/>
            <person name="Durant E.L."/>
            <person name="Winson M.K."/>
            <person name="Chhabra S.R."/>
            <person name="Williams P."/>
            <person name="Macintyre S."/>
            <person name="Stewart G.S.A.B."/>
        </authorList>
    </citation>
    <scope>NUCLEOTIDE SEQUENCE [GENOMIC DNA]</scope>
    <source>
        <strain>ATCC 33658 / DSM 19634 / JCM 7874 / NCIMB 1102 / NCTC 12959</strain>
    </source>
</reference>
<name>YGGA_AERSA</name>
<keyword id="KW-0029">Amino-acid transport</keyword>
<keyword id="KW-1003">Cell membrane</keyword>
<keyword id="KW-0472">Membrane</keyword>
<keyword id="KW-0812">Transmembrane</keyword>
<keyword id="KW-1133">Transmembrane helix</keyword>
<keyword id="KW-0813">Transport</keyword>
<feature type="chain" id="PRO_0000204171" description="Putative amino-acid transporter YggA">
    <location>
        <begin position="1"/>
        <end position="206"/>
    </location>
</feature>
<feature type="transmembrane region" description="Helical" evidence="1">
    <location>
        <begin position="1"/>
        <end position="21"/>
    </location>
</feature>
<feature type="transmembrane region" description="Helical" evidence="1">
    <location>
        <begin position="37"/>
        <end position="57"/>
    </location>
</feature>
<feature type="transmembrane region" description="Helical" evidence="1">
    <location>
        <begin position="65"/>
        <end position="85"/>
    </location>
</feature>
<feature type="transmembrane region" description="Helical" evidence="1">
    <location>
        <begin position="116"/>
        <end position="136"/>
    </location>
</feature>
<feature type="transmembrane region" description="Helical" evidence="1">
    <location>
        <begin position="148"/>
        <end position="168"/>
    </location>
</feature>
<feature type="transmembrane region" description="Helical" evidence="1">
    <location>
        <begin position="185"/>
        <end position="205"/>
    </location>
</feature>
<dbReference type="EMBL" id="U65741">
    <property type="protein sequence ID" value="AAB70019.1"/>
    <property type="status" value="ALT_INIT"/>
    <property type="molecule type" value="Genomic_DNA"/>
</dbReference>
<dbReference type="STRING" id="1233098.GCA_000315855_00761"/>
<dbReference type="OMA" id="HVFAVCL"/>
<dbReference type="GO" id="GO:0005886">
    <property type="term" value="C:plasma membrane"/>
    <property type="evidence" value="ECO:0007669"/>
    <property type="project" value="UniProtKB-SubCell"/>
</dbReference>
<dbReference type="GO" id="GO:0015171">
    <property type="term" value="F:amino acid transmembrane transporter activity"/>
    <property type="evidence" value="ECO:0007669"/>
    <property type="project" value="TreeGrafter"/>
</dbReference>
<dbReference type="InterPro" id="IPR001123">
    <property type="entry name" value="LeuE-type"/>
</dbReference>
<dbReference type="InterPro" id="IPR004777">
    <property type="entry name" value="Lys/arg_exporter"/>
</dbReference>
<dbReference type="NCBIfam" id="TIGR00948">
    <property type="entry name" value="2a75"/>
    <property type="match status" value="1"/>
</dbReference>
<dbReference type="PANTHER" id="PTHR30086">
    <property type="entry name" value="ARGININE EXPORTER PROTEIN ARGO"/>
    <property type="match status" value="1"/>
</dbReference>
<dbReference type="PANTHER" id="PTHR30086:SF20">
    <property type="entry name" value="ARGININE EXPORTER PROTEIN ARGO-RELATED"/>
    <property type="match status" value="1"/>
</dbReference>
<dbReference type="Pfam" id="PF01810">
    <property type="entry name" value="LysE"/>
    <property type="match status" value="1"/>
</dbReference>
<organism>
    <name type="scientific">Aeromonas salmonicida</name>
    <dbReference type="NCBI Taxonomy" id="645"/>
    <lineage>
        <taxon>Bacteria</taxon>
        <taxon>Pseudomonadati</taxon>
        <taxon>Pseudomonadota</taxon>
        <taxon>Gammaproteobacteria</taxon>
        <taxon>Aeromonadales</taxon>
        <taxon>Aeromonadaceae</taxon>
        <taxon>Aeromonas</taxon>
    </lineage>
</organism>
<gene>
    <name type="primary">yggA</name>
</gene>
<evidence type="ECO:0000255" key="1"/>
<evidence type="ECO:0000305" key="2"/>
<accession>P70775</accession>